<evidence type="ECO:0000255" key="1">
    <source>
        <dbReference type="HAMAP-Rule" id="MF_00139"/>
    </source>
</evidence>
<evidence type="ECO:0000255" key="2">
    <source>
        <dbReference type="PROSITE-ProRule" id="PRU01202"/>
    </source>
</evidence>
<protein>
    <recommendedName>
        <fullName evidence="1">Bifunctional purine biosynthesis protein PurH</fullName>
    </recommendedName>
    <domain>
        <recommendedName>
            <fullName evidence="1">Phosphoribosylaminoimidazolecarboxamide formyltransferase</fullName>
            <ecNumber evidence="1">2.1.2.3</ecNumber>
        </recommendedName>
        <alternativeName>
            <fullName evidence="1">AICAR transformylase</fullName>
        </alternativeName>
    </domain>
    <domain>
        <recommendedName>
            <fullName evidence="1">IMP cyclohydrolase</fullName>
            <ecNumber evidence="1">3.5.4.10</ecNumber>
        </recommendedName>
        <alternativeName>
            <fullName evidence="1">ATIC</fullName>
        </alternativeName>
        <alternativeName>
            <fullName evidence="1">IMP synthase</fullName>
        </alternativeName>
        <alternativeName>
            <fullName evidence="1">Inosinicase</fullName>
        </alternativeName>
    </domain>
</protein>
<accession>Q5HQ97</accession>
<gene>
    <name evidence="1" type="primary">purH</name>
    <name type="ordered locus">SERP0658</name>
</gene>
<reference key="1">
    <citation type="journal article" date="2005" name="J. Bacteriol.">
        <title>Insights on evolution of virulence and resistance from the complete genome analysis of an early methicillin-resistant Staphylococcus aureus strain and a biofilm-producing methicillin-resistant Staphylococcus epidermidis strain.</title>
        <authorList>
            <person name="Gill S.R."/>
            <person name="Fouts D.E."/>
            <person name="Archer G.L."/>
            <person name="Mongodin E.F."/>
            <person name="DeBoy R.T."/>
            <person name="Ravel J."/>
            <person name="Paulsen I.T."/>
            <person name="Kolonay J.F."/>
            <person name="Brinkac L.M."/>
            <person name="Beanan M.J."/>
            <person name="Dodson R.J."/>
            <person name="Daugherty S.C."/>
            <person name="Madupu R."/>
            <person name="Angiuoli S.V."/>
            <person name="Durkin A.S."/>
            <person name="Haft D.H."/>
            <person name="Vamathevan J.J."/>
            <person name="Khouri H."/>
            <person name="Utterback T.R."/>
            <person name="Lee C."/>
            <person name="Dimitrov G."/>
            <person name="Jiang L."/>
            <person name="Qin H."/>
            <person name="Weidman J."/>
            <person name="Tran K."/>
            <person name="Kang K.H."/>
            <person name="Hance I.R."/>
            <person name="Nelson K.E."/>
            <person name="Fraser C.M."/>
        </authorList>
    </citation>
    <scope>NUCLEOTIDE SEQUENCE [LARGE SCALE GENOMIC DNA]</scope>
    <source>
        <strain>ATCC 35984 / DSM 28319 / BCRC 17069 / CCUG 31568 / BM 3577 / RP62A</strain>
    </source>
</reference>
<name>PUR9_STAEQ</name>
<organism>
    <name type="scientific">Staphylococcus epidermidis (strain ATCC 35984 / DSM 28319 / BCRC 17069 / CCUG 31568 / BM 3577 / RP62A)</name>
    <dbReference type="NCBI Taxonomy" id="176279"/>
    <lineage>
        <taxon>Bacteria</taxon>
        <taxon>Bacillati</taxon>
        <taxon>Bacillota</taxon>
        <taxon>Bacilli</taxon>
        <taxon>Bacillales</taxon>
        <taxon>Staphylococcaceae</taxon>
        <taxon>Staphylococcus</taxon>
    </lineage>
</organism>
<dbReference type="EC" id="2.1.2.3" evidence="1"/>
<dbReference type="EC" id="3.5.4.10" evidence="1"/>
<dbReference type="EMBL" id="CP000029">
    <property type="protein sequence ID" value="AAW54011.1"/>
    <property type="molecule type" value="Genomic_DNA"/>
</dbReference>
<dbReference type="RefSeq" id="WP_002485342.1">
    <property type="nucleotide sequence ID" value="NC_002976.3"/>
</dbReference>
<dbReference type="SMR" id="Q5HQ97"/>
<dbReference type="STRING" id="176279.SERP0658"/>
<dbReference type="GeneID" id="50019089"/>
<dbReference type="KEGG" id="ser:SERP0658"/>
<dbReference type="eggNOG" id="COG0138">
    <property type="taxonomic scope" value="Bacteria"/>
</dbReference>
<dbReference type="HOGENOM" id="CLU_016316_5_2_9"/>
<dbReference type="UniPathway" id="UPA00074">
    <property type="reaction ID" value="UER00133"/>
</dbReference>
<dbReference type="UniPathway" id="UPA00074">
    <property type="reaction ID" value="UER00135"/>
</dbReference>
<dbReference type="Proteomes" id="UP000000531">
    <property type="component" value="Chromosome"/>
</dbReference>
<dbReference type="GO" id="GO:0005829">
    <property type="term" value="C:cytosol"/>
    <property type="evidence" value="ECO:0007669"/>
    <property type="project" value="TreeGrafter"/>
</dbReference>
<dbReference type="GO" id="GO:0003937">
    <property type="term" value="F:IMP cyclohydrolase activity"/>
    <property type="evidence" value="ECO:0007669"/>
    <property type="project" value="UniProtKB-UniRule"/>
</dbReference>
<dbReference type="GO" id="GO:0004643">
    <property type="term" value="F:phosphoribosylaminoimidazolecarboxamide formyltransferase activity"/>
    <property type="evidence" value="ECO:0007669"/>
    <property type="project" value="UniProtKB-UniRule"/>
</dbReference>
<dbReference type="GO" id="GO:0006189">
    <property type="term" value="P:'de novo' IMP biosynthetic process"/>
    <property type="evidence" value="ECO:0007669"/>
    <property type="project" value="UniProtKB-UniRule"/>
</dbReference>
<dbReference type="CDD" id="cd01421">
    <property type="entry name" value="IMPCH"/>
    <property type="match status" value="1"/>
</dbReference>
<dbReference type="FunFam" id="3.40.140.20:FF:000001">
    <property type="entry name" value="Bifunctional purine biosynthesis protein PurH"/>
    <property type="match status" value="1"/>
</dbReference>
<dbReference type="FunFam" id="3.40.140.20:FF:000002">
    <property type="entry name" value="Bifunctional purine biosynthesis protein PurH"/>
    <property type="match status" value="1"/>
</dbReference>
<dbReference type="FunFam" id="3.40.50.1380:FF:000001">
    <property type="entry name" value="Bifunctional purine biosynthesis protein PurH"/>
    <property type="match status" value="1"/>
</dbReference>
<dbReference type="Gene3D" id="3.40.140.20">
    <property type="match status" value="2"/>
</dbReference>
<dbReference type="Gene3D" id="3.40.50.1380">
    <property type="entry name" value="Methylglyoxal synthase-like domain"/>
    <property type="match status" value="1"/>
</dbReference>
<dbReference type="HAMAP" id="MF_00139">
    <property type="entry name" value="PurH"/>
    <property type="match status" value="1"/>
</dbReference>
<dbReference type="InterPro" id="IPR024051">
    <property type="entry name" value="AICAR_Tfase_dup_dom_sf"/>
</dbReference>
<dbReference type="InterPro" id="IPR016193">
    <property type="entry name" value="Cytidine_deaminase-like"/>
</dbReference>
<dbReference type="InterPro" id="IPR011607">
    <property type="entry name" value="MGS-like_dom"/>
</dbReference>
<dbReference type="InterPro" id="IPR036914">
    <property type="entry name" value="MGS-like_dom_sf"/>
</dbReference>
<dbReference type="InterPro" id="IPR002695">
    <property type="entry name" value="PurH-like"/>
</dbReference>
<dbReference type="NCBIfam" id="NF002049">
    <property type="entry name" value="PRK00881.1"/>
    <property type="match status" value="1"/>
</dbReference>
<dbReference type="NCBIfam" id="TIGR00355">
    <property type="entry name" value="purH"/>
    <property type="match status" value="1"/>
</dbReference>
<dbReference type="PANTHER" id="PTHR11692:SF0">
    <property type="entry name" value="BIFUNCTIONAL PURINE BIOSYNTHESIS PROTEIN ATIC"/>
    <property type="match status" value="1"/>
</dbReference>
<dbReference type="PANTHER" id="PTHR11692">
    <property type="entry name" value="BIFUNCTIONAL PURINE BIOSYNTHESIS PROTEIN PURH"/>
    <property type="match status" value="1"/>
</dbReference>
<dbReference type="Pfam" id="PF01808">
    <property type="entry name" value="AICARFT_IMPCHas"/>
    <property type="match status" value="1"/>
</dbReference>
<dbReference type="Pfam" id="PF02142">
    <property type="entry name" value="MGS"/>
    <property type="match status" value="1"/>
</dbReference>
<dbReference type="PIRSF" id="PIRSF000414">
    <property type="entry name" value="AICARFT_IMPCHas"/>
    <property type="match status" value="1"/>
</dbReference>
<dbReference type="SMART" id="SM00798">
    <property type="entry name" value="AICARFT_IMPCHas"/>
    <property type="match status" value="1"/>
</dbReference>
<dbReference type="SMART" id="SM00851">
    <property type="entry name" value="MGS"/>
    <property type="match status" value="1"/>
</dbReference>
<dbReference type="SUPFAM" id="SSF53927">
    <property type="entry name" value="Cytidine deaminase-like"/>
    <property type="match status" value="1"/>
</dbReference>
<dbReference type="SUPFAM" id="SSF52335">
    <property type="entry name" value="Methylglyoxal synthase-like"/>
    <property type="match status" value="1"/>
</dbReference>
<dbReference type="PROSITE" id="PS51855">
    <property type="entry name" value="MGS"/>
    <property type="match status" value="1"/>
</dbReference>
<keyword id="KW-0378">Hydrolase</keyword>
<keyword id="KW-0511">Multifunctional enzyme</keyword>
<keyword id="KW-0658">Purine biosynthesis</keyword>
<keyword id="KW-1185">Reference proteome</keyword>
<keyword id="KW-0808">Transferase</keyword>
<proteinExistence type="inferred from homology"/>
<comment type="catalytic activity">
    <reaction evidence="1">
        <text>(6R)-10-formyltetrahydrofolate + 5-amino-1-(5-phospho-beta-D-ribosyl)imidazole-4-carboxamide = 5-formamido-1-(5-phospho-D-ribosyl)imidazole-4-carboxamide + (6S)-5,6,7,8-tetrahydrofolate</text>
        <dbReference type="Rhea" id="RHEA:22192"/>
        <dbReference type="ChEBI" id="CHEBI:57453"/>
        <dbReference type="ChEBI" id="CHEBI:58467"/>
        <dbReference type="ChEBI" id="CHEBI:58475"/>
        <dbReference type="ChEBI" id="CHEBI:195366"/>
        <dbReference type="EC" id="2.1.2.3"/>
    </reaction>
</comment>
<comment type="catalytic activity">
    <reaction evidence="1">
        <text>IMP + H2O = 5-formamido-1-(5-phospho-D-ribosyl)imidazole-4-carboxamide</text>
        <dbReference type="Rhea" id="RHEA:18445"/>
        <dbReference type="ChEBI" id="CHEBI:15377"/>
        <dbReference type="ChEBI" id="CHEBI:58053"/>
        <dbReference type="ChEBI" id="CHEBI:58467"/>
        <dbReference type="EC" id="3.5.4.10"/>
    </reaction>
</comment>
<comment type="pathway">
    <text evidence="1">Purine metabolism; IMP biosynthesis via de novo pathway; 5-formamido-1-(5-phospho-D-ribosyl)imidazole-4-carboxamide from 5-amino-1-(5-phospho-D-ribosyl)imidazole-4-carboxamide (10-formyl THF route): step 1/1.</text>
</comment>
<comment type="pathway">
    <text evidence="1">Purine metabolism; IMP biosynthesis via de novo pathway; IMP from 5-formamido-1-(5-phospho-D-ribosyl)imidazole-4-carboxamide: step 1/1.</text>
</comment>
<comment type="domain">
    <text evidence="1">The IMP cyclohydrolase activity resides in the N-terminal region.</text>
</comment>
<comment type="similarity">
    <text evidence="1">Belongs to the PurH family.</text>
</comment>
<feature type="chain" id="PRO_0000192129" description="Bifunctional purine biosynthesis protein PurH">
    <location>
        <begin position="1"/>
        <end position="492"/>
    </location>
</feature>
<feature type="domain" description="MGS-like" evidence="2">
    <location>
        <begin position="1"/>
        <end position="144"/>
    </location>
</feature>
<sequence>MKKAILSVSNKSGIVEFAKALTNLDYELYSTGGTKRVLEDANINIKSVSELTQFPEIMDGRVKTLHPAVHGGILADRDKEHHLEQLREQHIDLIDMVVVNLYPFQQTVAQPDVTETDAVENIDIGGPTMLRAAAKNFKHVTTIVHPSDYNEVIERIKNHQLDEAYRKSLMVKVFQHTNEYDHAIVNYFKDNKETLRYGENPQQSAYFVRTSDSKHTIAGAKQLHGKQLSFNNIKDADAALSLVKKFNEPTAVAVKHMNPCGVGIGQSIDEAFQHAYEADNQSIFGGIIALNRTVDVKLAEALHSIFLEVVIAPQFTEEALKILTQKKNIRLLQIDMTIDNAEQEFVSVSGGYLVQDKDNKDVTRNDMTVATDTQPTEAQWEAMLLGWKVVSAVKSNAVILSNNKQTVGIGAGQMNRVGSAKIAIERAIEINDNVALVSDGFFPMGDTVEYAAEHGIKAIIQPGGSIKDQDSIDMANKYGITMVMTGMRHFKH</sequence>